<organism>
    <name type="scientific">Canis lupus familiaris</name>
    <name type="common">Dog</name>
    <name type="synonym">Canis familiaris</name>
    <dbReference type="NCBI Taxonomy" id="9615"/>
    <lineage>
        <taxon>Eukaryota</taxon>
        <taxon>Metazoa</taxon>
        <taxon>Chordata</taxon>
        <taxon>Craniata</taxon>
        <taxon>Vertebrata</taxon>
        <taxon>Euteleostomi</taxon>
        <taxon>Mammalia</taxon>
        <taxon>Eutheria</taxon>
        <taxon>Laurasiatheria</taxon>
        <taxon>Carnivora</taxon>
        <taxon>Caniformia</taxon>
        <taxon>Canidae</taxon>
        <taxon>Canis</taxon>
    </lineage>
</organism>
<proteinExistence type="evidence at transcript level"/>
<accession>Q9MZI6</accession>
<gene>
    <name type="primary">GNRHR</name>
</gene>
<protein>
    <recommendedName>
        <fullName>Gonadotropin-releasing hormone receptor</fullName>
        <shortName>GnRH receptor</shortName>
        <shortName>GnRH-R</shortName>
    </recommendedName>
</protein>
<comment type="function">
    <text>Receptor for gonadotropin releasing hormone (GnRH) that mediates the action of GnRH to stimulate the secretion of the gonadotropic hormones luteinizing hormone (LH) and follicle-stimulating hormone (FSH). This receptor mediates its action by association with G-proteins that activate a phosphatidylinositol-calcium second messenger system.</text>
</comment>
<comment type="subcellular location">
    <subcellularLocation>
        <location>Cell membrane</location>
        <topology>Multi-pass membrane protein</topology>
    </subcellularLocation>
</comment>
<comment type="similarity">
    <text evidence="2">Belongs to the G-protein coupled receptor 1 family.</text>
</comment>
<name>GNRHR_CANLF</name>
<sequence>MASASPEQNQNHCSAVNNSNMLMQGNLPTLTLSGKIRVTVTFFLFLLSTIFNASFLLKLQKWTQKKEKGKKLSRMKVLLKHLTLANLLETLIVMPLDGMWNITVQWYAGEFLCKVLSYLKLFSMYAPAFMMVVISLDRSLAITRPLAMKNNGKLGQSMIGLAWLLSGIFAGPQLYIFRMIHLADSSGQTEGFPQCVTHCSFPQWWHQAFYNFFTFSCLFIIPLFITLICNAKIIFTLTRVLHQDPHELQLNQSKNNIPRARLRTLKMTVAFATSFTVCWTPYYVLGIWYWFDPEMLNRVSDPVNHFFFLFALLNPCFDPLIYGYFSL</sequence>
<dbReference type="EMBL" id="AF206513">
    <property type="protein sequence ID" value="AAF87097.1"/>
    <property type="molecule type" value="mRNA"/>
</dbReference>
<dbReference type="RefSeq" id="NP_001003121.1">
    <property type="nucleotide sequence ID" value="NM_001003121.1"/>
</dbReference>
<dbReference type="SMR" id="Q9MZI6"/>
<dbReference type="FunCoup" id="Q9MZI6">
    <property type="interactions" value="249"/>
</dbReference>
<dbReference type="STRING" id="9615.ENSCAFP00000004111"/>
<dbReference type="ChEMBL" id="CHEMBL5303550"/>
<dbReference type="GlyCosmos" id="Q9MZI6">
    <property type="glycosylation" value="2 sites, No reported glycans"/>
</dbReference>
<dbReference type="PaxDb" id="9612-ENSCAFP00000004111"/>
<dbReference type="GeneID" id="403718"/>
<dbReference type="KEGG" id="cfa:403718"/>
<dbReference type="CTD" id="2798"/>
<dbReference type="eggNOG" id="KOG3656">
    <property type="taxonomic scope" value="Eukaryota"/>
</dbReference>
<dbReference type="InParanoid" id="Q9MZI6"/>
<dbReference type="OrthoDB" id="6022667at2759"/>
<dbReference type="Proteomes" id="UP000002254">
    <property type="component" value="Unplaced"/>
</dbReference>
<dbReference type="Proteomes" id="UP000694429">
    <property type="component" value="Unplaced"/>
</dbReference>
<dbReference type="Proteomes" id="UP000694542">
    <property type="component" value="Unplaced"/>
</dbReference>
<dbReference type="Proteomes" id="UP000805418">
    <property type="component" value="Unplaced"/>
</dbReference>
<dbReference type="GO" id="GO:0005886">
    <property type="term" value="C:plasma membrane"/>
    <property type="evidence" value="ECO:0000318"/>
    <property type="project" value="GO_Central"/>
</dbReference>
<dbReference type="GO" id="GO:0004968">
    <property type="term" value="F:gonadotropin-releasing hormone receptor activity"/>
    <property type="evidence" value="ECO:0000318"/>
    <property type="project" value="GO_Central"/>
</dbReference>
<dbReference type="GO" id="GO:0032870">
    <property type="term" value="P:cellular response to hormone stimulus"/>
    <property type="evidence" value="ECO:0000318"/>
    <property type="project" value="GO_Central"/>
</dbReference>
<dbReference type="GO" id="GO:0007186">
    <property type="term" value="P:G protein-coupled receptor signaling pathway"/>
    <property type="evidence" value="ECO:0000318"/>
    <property type="project" value="GO_Central"/>
</dbReference>
<dbReference type="FunFam" id="1.20.1070.10:FF:000203">
    <property type="entry name" value="gonadotropin-releasing hormone receptor"/>
    <property type="match status" value="1"/>
</dbReference>
<dbReference type="Gene3D" id="1.20.1070.10">
    <property type="entry name" value="Rhodopsin 7-helix transmembrane proteins"/>
    <property type="match status" value="1"/>
</dbReference>
<dbReference type="InterPro" id="IPR000276">
    <property type="entry name" value="GPCR_Rhodpsn"/>
</dbReference>
<dbReference type="InterPro" id="IPR017452">
    <property type="entry name" value="GPCR_Rhodpsn_7TM"/>
</dbReference>
<dbReference type="InterPro" id="IPR001658">
    <property type="entry name" value="GphnRH_fam_rcpt"/>
</dbReference>
<dbReference type="PANTHER" id="PTHR24241:SF22">
    <property type="entry name" value="GONADOTROPIN-RELEASING HORMONE RECEPTOR"/>
    <property type="match status" value="1"/>
</dbReference>
<dbReference type="PANTHER" id="PTHR24241">
    <property type="entry name" value="NEUROPEPTIDE RECEPTOR-RELATED G-PROTEIN COUPLED RECEPTOR"/>
    <property type="match status" value="1"/>
</dbReference>
<dbReference type="Pfam" id="PF00001">
    <property type="entry name" value="7tm_1"/>
    <property type="match status" value="1"/>
</dbReference>
<dbReference type="PRINTS" id="PR00529">
    <property type="entry name" value="GNADOTRPHINR"/>
</dbReference>
<dbReference type="PRINTS" id="PR00237">
    <property type="entry name" value="GPCRRHODOPSN"/>
</dbReference>
<dbReference type="SUPFAM" id="SSF81321">
    <property type="entry name" value="Family A G protein-coupled receptor-like"/>
    <property type="match status" value="1"/>
</dbReference>
<dbReference type="PROSITE" id="PS00237">
    <property type="entry name" value="G_PROTEIN_RECEP_F1_1"/>
    <property type="match status" value="1"/>
</dbReference>
<dbReference type="PROSITE" id="PS50262">
    <property type="entry name" value="G_PROTEIN_RECEP_F1_2"/>
    <property type="match status" value="1"/>
</dbReference>
<evidence type="ECO:0000255" key="1"/>
<evidence type="ECO:0000255" key="2">
    <source>
        <dbReference type="PROSITE-ProRule" id="PRU00521"/>
    </source>
</evidence>
<reference key="1">
    <citation type="journal article" date="2000" name="Mol. Endocrinol.">
        <title>Identification of Phe313 of the gonadotropin-releasing hormone (GnRH) receptor as a site critical for the binding of nonpeptide GnRH antagonists.</title>
        <authorList>
            <person name="Cui J."/>
            <person name="Smith R.G."/>
            <person name="Mount G.R."/>
            <person name="Lo J.L."/>
            <person name="Yu J."/>
            <person name="Walsh T.F."/>
            <person name="Singh S.B."/>
            <person name="DeVita R.J."/>
            <person name="Goulet M.T."/>
            <person name="Schaeffer J.M."/>
            <person name="Cheng K."/>
        </authorList>
    </citation>
    <scope>NUCLEOTIDE SEQUENCE [MRNA]</scope>
</reference>
<feature type="chain" id="PRO_0000069484" description="Gonadotropin-releasing hormone receptor">
    <location>
        <begin position="1"/>
        <end position="327"/>
    </location>
</feature>
<feature type="topological domain" description="Extracellular" evidence="1">
    <location>
        <begin position="1"/>
        <end position="37"/>
    </location>
</feature>
<feature type="transmembrane region" description="Helical; Name=1" evidence="1">
    <location>
        <begin position="38"/>
        <end position="57"/>
    </location>
</feature>
<feature type="topological domain" description="Cytoplasmic" evidence="1">
    <location>
        <begin position="58"/>
        <end position="76"/>
    </location>
</feature>
<feature type="transmembrane region" description="Helical; Name=2" evidence="1">
    <location>
        <begin position="77"/>
        <end position="96"/>
    </location>
</feature>
<feature type="topological domain" description="Extracellular" evidence="1">
    <location>
        <begin position="97"/>
        <end position="114"/>
    </location>
</feature>
<feature type="transmembrane region" description="Helical; Name=3" evidence="1">
    <location>
        <begin position="115"/>
        <end position="136"/>
    </location>
</feature>
<feature type="topological domain" description="Cytoplasmic" evidence="1">
    <location>
        <begin position="137"/>
        <end position="163"/>
    </location>
</feature>
<feature type="transmembrane region" description="Helical; Name=4" evidence="1">
    <location>
        <begin position="164"/>
        <end position="183"/>
    </location>
</feature>
<feature type="topological domain" description="Extracellular" evidence="1">
    <location>
        <begin position="184"/>
        <end position="211"/>
    </location>
</feature>
<feature type="transmembrane region" description="Helical; Name=5" evidence="1">
    <location>
        <begin position="212"/>
        <end position="231"/>
    </location>
</feature>
<feature type="topological domain" description="Cytoplasmic" evidence="1">
    <location>
        <begin position="232"/>
        <end position="280"/>
    </location>
</feature>
<feature type="transmembrane region" description="Helical; Name=6" evidence="1">
    <location>
        <begin position="281"/>
        <end position="299"/>
    </location>
</feature>
<feature type="topological domain" description="Extracellular" evidence="1">
    <location>
        <begin position="300"/>
        <end position="305"/>
    </location>
</feature>
<feature type="transmembrane region" description="Helical; Name=7" evidence="1">
    <location>
        <begin position="306"/>
        <end position="325"/>
    </location>
</feature>
<feature type="topological domain" description="Cytoplasmic" evidence="1">
    <location>
        <begin position="326"/>
        <end position="327"/>
    </location>
</feature>
<feature type="glycosylation site" description="N-linked (GlcNAc...) asparagine" evidence="1">
    <location>
        <position position="17"/>
    </location>
</feature>
<feature type="glycosylation site" description="N-linked (GlcNAc...) asparagine" evidence="1">
    <location>
        <position position="101"/>
    </location>
</feature>
<feature type="disulfide bond" evidence="2">
    <location>
        <begin position="113"/>
        <end position="195"/>
    </location>
</feature>
<keyword id="KW-1003">Cell membrane</keyword>
<keyword id="KW-1015">Disulfide bond</keyword>
<keyword id="KW-0297">G-protein coupled receptor</keyword>
<keyword id="KW-0325">Glycoprotein</keyword>
<keyword id="KW-0472">Membrane</keyword>
<keyword id="KW-0675">Receptor</keyword>
<keyword id="KW-1185">Reference proteome</keyword>
<keyword id="KW-0807">Transducer</keyword>
<keyword id="KW-0812">Transmembrane</keyword>
<keyword id="KW-1133">Transmembrane helix</keyword>